<comment type="function">
    <text evidence="1">Catalyzes the conversion of dethiobiotin (DTB) to biotin by the insertion of a sulfur atom into dethiobiotin via a radical-based mechanism.</text>
</comment>
<comment type="catalytic activity">
    <reaction evidence="1">
        <text>(4R,5S)-dethiobiotin + (sulfur carrier)-SH + 2 reduced [2Fe-2S]-[ferredoxin] + 2 S-adenosyl-L-methionine = (sulfur carrier)-H + biotin + 2 5'-deoxyadenosine + 2 L-methionine + 2 oxidized [2Fe-2S]-[ferredoxin]</text>
        <dbReference type="Rhea" id="RHEA:22060"/>
        <dbReference type="Rhea" id="RHEA-COMP:10000"/>
        <dbReference type="Rhea" id="RHEA-COMP:10001"/>
        <dbReference type="Rhea" id="RHEA-COMP:14737"/>
        <dbReference type="Rhea" id="RHEA-COMP:14739"/>
        <dbReference type="ChEBI" id="CHEBI:17319"/>
        <dbReference type="ChEBI" id="CHEBI:29917"/>
        <dbReference type="ChEBI" id="CHEBI:33737"/>
        <dbReference type="ChEBI" id="CHEBI:33738"/>
        <dbReference type="ChEBI" id="CHEBI:57586"/>
        <dbReference type="ChEBI" id="CHEBI:57844"/>
        <dbReference type="ChEBI" id="CHEBI:59789"/>
        <dbReference type="ChEBI" id="CHEBI:64428"/>
        <dbReference type="ChEBI" id="CHEBI:149473"/>
        <dbReference type="EC" id="2.8.1.6"/>
    </reaction>
</comment>
<comment type="cofactor">
    <cofactor evidence="1">
        <name>[4Fe-4S] cluster</name>
        <dbReference type="ChEBI" id="CHEBI:49883"/>
    </cofactor>
    <text evidence="1">Binds 1 [4Fe-4S] cluster. The cluster is coordinated with 3 cysteines and an exchangeable S-adenosyl-L-methionine.</text>
</comment>
<comment type="cofactor">
    <cofactor evidence="1">
        <name>[2Fe-2S] cluster</name>
        <dbReference type="ChEBI" id="CHEBI:190135"/>
    </cofactor>
    <text evidence="1">Binds 1 [2Fe-2S] cluster. The cluster is coordinated with 3 cysteines and 1 arginine.</text>
</comment>
<comment type="pathway">
    <text evidence="1">Cofactor biosynthesis; biotin biosynthesis; biotin from 7,8-diaminononanoate: step 2/2.</text>
</comment>
<comment type="subunit">
    <text evidence="1">Homodimer.</text>
</comment>
<comment type="similarity">
    <text evidence="1">Belongs to the radical SAM superfamily. Biotin synthase family.</text>
</comment>
<proteinExistence type="inferred from homology"/>
<accession>A5U2U5</accession>
<gene>
    <name evidence="1" type="primary">bioB</name>
    <name type="ordered locus">MRA_1599</name>
</gene>
<sequence>MTQAATRPTNDAGQDGGNNSDILVVARQQVLQRGEGLNQDQVLAVLQLPDDRLEELLALAHEVRMRWCGPEVEVEGIISLKTGGCPEDCHFCSQSGLFASPVRSAWLDIPSLVEAAKQTAKSGATEFCIVAAVRGPDERLMAQVAAGIEAIRNEVEINIACSLGMLTAEQVDQLAARGVHRYNHNLETARSFFANVVTTHTWEERWQTLSMVRDAGMEVCCGGILGMGETLQQRAEFAAELAELGPDEVPLNFLNPRPGTPFADLEVMPVGDALKAVAAFRLALPRTMLRFAGGREITLGDLGAKRGILGGINAVIVGNYLTTLGRPAEADLELLDELQMPLKALNASL</sequence>
<keyword id="KW-0001">2Fe-2S</keyword>
<keyword id="KW-0004">4Fe-4S</keyword>
<keyword id="KW-0093">Biotin biosynthesis</keyword>
<keyword id="KW-0408">Iron</keyword>
<keyword id="KW-0411">Iron-sulfur</keyword>
<keyword id="KW-0479">Metal-binding</keyword>
<keyword id="KW-1185">Reference proteome</keyword>
<keyword id="KW-0949">S-adenosyl-L-methionine</keyword>
<keyword id="KW-0808">Transferase</keyword>
<organism>
    <name type="scientific">Mycobacterium tuberculosis (strain ATCC 25177 / H37Ra)</name>
    <dbReference type="NCBI Taxonomy" id="419947"/>
    <lineage>
        <taxon>Bacteria</taxon>
        <taxon>Bacillati</taxon>
        <taxon>Actinomycetota</taxon>
        <taxon>Actinomycetes</taxon>
        <taxon>Mycobacteriales</taxon>
        <taxon>Mycobacteriaceae</taxon>
        <taxon>Mycobacterium</taxon>
        <taxon>Mycobacterium tuberculosis complex</taxon>
    </lineage>
</organism>
<reference key="1">
    <citation type="journal article" date="2008" name="PLoS ONE">
        <title>Genetic basis of virulence attenuation revealed by comparative genomic analysis of Mycobacterium tuberculosis strain H37Ra versus H37Rv.</title>
        <authorList>
            <person name="Zheng H."/>
            <person name="Lu L."/>
            <person name="Wang B."/>
            <person name="Pu S."/>
            <person name="Zhang X."/>
            <person name="Zhu G."/>
            <person name="Shi W."/>
            <person name="Zhang L."/>
            <person name="Wang H."/>
            <person name="Wang S."/>
            <person name="Zhao G."/>
            <person name="Zhang Y."/>
        </authorList>
    </citation>
    <scope>NUCLEOTIDE SEQUENCE [LARGE SCALE GENOMIC DNA]</scope>
    <source>
        <strain>ATCC 25177 / H37Ra</strain>
    </source>
</reference>
<protein>
    <recommendedName>
        <fullName evidence="1">Biotin synthase</fullName>
        <ecNumber evidence="1">2.8.1.6</ecNumber>
    </recommendedName>
</protein>
<feature type="chain" id="PRO_0000381486" description="Biotin synthase">
    <location>
        <begin position="1"/>
        <end position="349"/>
    </location>
</feature>
<feature type="domain" description="Radical SAM core" evidence="2">
    <location>
        <begin position="70"/>
        <end position="295"/>
    </location>
</feature>
<feature type="binding site" evidence="1">
    <location>
        <position position="85"/>
    </location>
    <ligand>
        <name>[4Fe-4S] cluster</name>
        <dbReference type="ChEBI" id="CHEBI:49883"/>
        <note>4Fe-4S-S-AdoMet</note>
    </ligand>
</feature>
<feature type="binding site" evidence="1">
    <location>
        <position position="89"/>
    </location>
    <ligand>
        <name>[4Fe-4S] cluster</name>
        <dbReference type="ChEBI" id="CHEBI:49883"/>
        <note>4Fe-4S-S-AdoMet</note>
    </ligand>
</feature>
<feature type="binding site" evidence="1">
    <location>
        <position position="92"/>
    </location>
    <ligand>
        <name>[4Fe-4S] cluster</name>
        <dbReference type="ChEBI" id="CHEBI:49883"/>
        <note>4Fe-4S-S-AdoMet</note>
    </ligand>
</feature>
<feature type="binding site" evidence="1">
    <location>
        <position position="128"/>
    </location>
    <ligand>
        <name>[2Fe-2S] cluster</name>
        <dbReference type="ChEBI" id="CHEBI:190135"/>
    </ligand>
</feature>
<feature type="binding site" evidence="1">
    <location>
        <position position="161"/>
    </location>
    <ligand>
        <name>[2Fe-2S] cluster</name>
        <dbReference type="ChEBI" id="CHEBI:190135"/>
    </ligand>
</feature>
<feature type="binding site" evidence="1">
    <location>
        <position position="220"/>
    </location>
    <ligand>
        <name>[2Fe-2S] cluster</name>
        <dbReference type="ChEBI" id="CHEBI:190135"/>
    </ligand>
</feature>
<feature type="binding site" evidence="1">
    <location>
        <position position="290"/>
    </location>
    <ligand>
        <name>[2Fe-2S] cluster</name>
        <dbReference type="ChEBI" id="CHEBI:190135"/>
    </ligand>
</feature>
<name>BIOB_MYCTA</name>
<evidence type="ECO:0000255" key="1">
    <source>
        <dbReference type="HAMAP-Rule" id="MF_01694"/>
    </source>
</evidence>
<evidence type="ECO:0000255" key="2">
    <source>
        <dbReference type="PROSITE-ProRule" id="PRU01266"/>
    </source>
</evidence>
<dbReference type="EC" id="2.8.1.6" evidence="1"/>
<dbReference type="EMBL" id="CP000611">
    <property type="protein sequence ID" value="ABQ73345.1"/>
    <property type="molecule type" value="Genomic_DNA"/>
</dbReference>
<dbReference type="RefSeq" id="WP_003898934.1">
    <property type="nucleotide sequence ID" value="NZ_CP016972.1"/>
</dbReference>
<dbReference type="SMR" id="A5U2U5"/>
<dbReference type="KEGG" id="mra:MRA_1599"/>
<dbReference type="eggNOG" id="COG0502">
    <property type="taxonomic scope" value="Bacteria"/>
</dbReference>
<dbReference type="HOGENOM" id="CLU_033172_2_1_11"/>
<dbReference type="UniPathway" id="UPA00078">
    <property type="reaction ID" value="UER00162"/>
</dbReference>
<dbReference type="Proteomes" id="UP000001988">
    <property type="component" value="Chromosome"/>
</dbReference>
<dbReference type="GO" id="GO:0051537">
    <property type="term" value="F:2 iron, 2 sulfur cluster binding"/>
    <property type="evidence" value="ECO:0007669"/>
    <property type="project" value="UniProtKB-KW"/>
</dbReference>
<dbReference type="GO" id="GO:0051539">
    <property type="term" value="F:4 iron, 4 sulfur cluster binding"/>
    <property type="evidence" value="ECO:0007669"/>
    <property type="project" value="UniProtKB-KW"/>
</dbReference>
<dbReference type="GO" id="GO:0004076">
    <property type="term" value="F:biotin synthase activity"/>
    <property type="evidence" value="ECO:0007669"/>
    <property type="project" value="UniProtKB-UniRule"/>
</dbReference>
<dbReference type="GO" id="GO:0005506">
    <property type="term" value="F:iron ion binding"/>
    <property type="evidence" value="ECO:0007669"/>
    <property type="project" value="UniProtKB-UniRule"/>
</dbReference>
<dbReference type="GO" id="GO:0009102">
    <property type="term" value="P:biotin biosynthetic process"/>
    <property type="evidence" value="ECO:0007669"/>
    <property type="project" value="UniProtKB-UniRule"/>
</dbReference>
<dbReference type="CDD" id="cd01335">
    <property type="entry name" value="Radical_SAM"/>
    <property type="match status" value="1"/>
</dbReference>
<dbReference type="FunFam" id="3.20.20.70:FF:000026">
    <property type="entry name" value="Biotin synthase"/>
    <property type="match status" value="1"/>
</dbReference>
<dbReference type="Gene3D" id="3.20.20.70">
    <property type="entry name" value="Aldolase class I"/>
    <property type="match status" value="1"/>
</dbReference>
<dbReference type="HAMAP" id="MF_01694">
    <property type="entry name" value="BioB"/>
    <property type="match status" value="1"/>
</dbReference>
<dbReference type="InterPro" id="IPR013785">
    <property type="entry name" value="Aldolase_TIM"/>
</dbReference>
<dbReference type="InterPro" id="IPR010722">
    <property type="entry name" value="BATS_dom"/>
</dbReference>
<dbReference type="InterPro" id="IPR002684">
    <property type="entry name" value="Biotin_synth/BioAB"/>
</dbReference>
<dbReference type="InterPro" id="IPR024177">
    <property type="entry name" value="Biotin_synthase"/>
</dbReference>
<dbReference type="InterPro" id="IPR006638">
    <property type="entry name" value="Elp3/MiaA/NifB-like_rSAM"/>
</dbReference>
<dbReference type="InterPro" id="IPR007197">
    <property type="entry name" value="rSAM"/>
</dbReference>
<dbReference type="NCBIfam" id="TIGR00433">
    <property type="entry name" value="bioB"/>
    <property type="match status" value="1"/>
</dbReference>
<dbReference type="PANTHER" id="PTHR22976">
    <property type="entry name" value="BIOTIN SYNTHASE"/>
    <property type="match status" value="1"/>
</dbReference>
<dbReference type="PANTHER" id="PTHR22976:SF2">
    <property type="entry name" value="BIOTIN SYNTHASE, MITOCHONDRIAL"/>
    <property type="match status" value="1"/>
</dbReference>
<dbReference type="Pfam" id="PF06968">
    <property type="entry name" value="BATS"/>
    <property type="match status" value="1"/>
</dbReference>
<dbReference type="Pfam" id="PF04055">
    <property type="entry name" value="Radical_SAM"/>
    <property type="match status" value="1"/>
</dbReference>
<dbReference type="PIRSF" id="PIRSF001619">
    <property type="entry name" value="Biotin_synth"/>
    <property type="match status" value="1"/>
</dbReference>
<dbReference type="SFLD" id="SFLDG01060">
    <property type="entry name" value="BATS_domain_containing"/>
    <property type="match status" value="1"/>
</dbReference>
<dbReference type="SFLD" id="SFLDG01278">
    <property type="entry name" value="biotin_synthase_like"/>
    <property type="match status" value="1"/>
</dbReference>
<dbReference type="SMART" id="SM00876">
    <property type="entry name" value="BATS"/>
    <property type="match status" value="1"/>
</dbReference>
<dbReference type="SMART" id="SM00729">
    <property type="entry name" value="Elp3"/>
    <property type="match status" value="1"/>
</dbReference>
<dbReference type="SUPFAM" id="SSF102114">
    <property type="entry name" value="Radical SAM enzymes"/>
    <property type="match status" value="1"/>
</dbReference>
<dbReference type="PROSITE" id="PS51918">
    <property type="entry name" value="RADICAL_SAM"/>
    <property type="match status" value="1"/>
</dbReference>